<accession>Q9D6B9</accession>
<accession>A2ANK5</accession>
<name>HRCT1_MOUSE</name>
<feature type="chain" id="PRO_0000317639" description="Histidine-rich carboxyl terminus protein 1">
    <location>
        <begin position="1"/>
        <end position="109"/>
    </location>
</feature>
<feature type="transmembrane region" description="Helical" evidence="1">
    <location>
        <begin position="13"/>
        <end position="33"/>
    </location>
</feature>
<feature type="region of interest" description="Disordered" evidence="2">
    <location>
        <begin position="77"/>
        <end position="109"/>
    </location>
</feature>
<feature type="compositionally biased region" description="Basic residues" evidence="2">
    <location>
        <begin position="81"/>
        <end position="109"/>
    </location>
</feature>
<feature type="sequence conflict" description="In Ref. 1; BAB29342." evidence="3" ref="1">
    <original>R</original>
    <variation>G</variation>
    <location>
        <position position="57"/>
    </location>
</feature>
<dbReference type="EMBL" id="AK014425">
    <property type="protein sequence ID" value="BAB29342.1"/>
    <property type="molecule type" value="mRNA"/>
</dbReference>
<dbReference type="EMBL" id="AL824712">
    <property type="status" value="NOT_ANNOTATED_CDS"/>
    <property type="molecule type" value="Genomic_DNA"/>
</dbReference>
<dbReference type="CCDS" id="CCDS51169.1"/>
<dbReference type="RefSeq" id="NP_081787.1">
    <property type="nucleotide sequence ID" value="NM_027511.1"/>
</dbReference>
<dbReference type="SMR" id="Q9D6B9"/>
<dbReference type="STRING" id="10090.ENSMUSP00000092727"/>
<dbReference type="PaxDb" id="10090-ENSMUSP00000092727"/>
<dbReference type="Antibodypedia" id="78136">
    <property type="antibodies" value="5 antibodies from 5 providers"/>
</dbReference>
<dbReference type="Ensembl" id="ENSMUST00000095109.5">
    <property type="protein sequence ID" value="ENSMUSP00000092727.4"/>
    <property type="gene ID" value="ENSMUSG00000071001.5"/>
</dbReference>
<dbReference type="GeneID" id="100039781"/>
<dbReference type="KEGG" id="mmu:100039781"/>
<dbReference type="UCSC" id="uc008sqx.1">
    <property type="organism name" value="mouse"/>
</dbReference>
<dbReference type="AGR" id="MGI:1917945"/>
<dbReference type="CTD" id="646962"/>
<dbReference type="MGI" id="MGI:1917945">
    <property type="gene designation" value="Hrct1"/>
</dbReference>
<dbReference type="VEuPathDB" id="HostDB:ENSMUSG00000071001"/>
<dbReference type="eggNOG" id="ENOG502SX6E">
    <property type="taxonomic scope" value="Eukaryota"/>
</dbReference>
<dbReference type="GeneTree" id="ENSGT00510000049544"/>
<dbReference type="HOGENOM" id="CLU_177134_0_0_1"/>
<dbReference type="InParanoid" id="Q9D6B9"/>
<dbReference type="OMA" id="QPWPFRR"/>
<dbReference type="BioGRID-ORCS" id="100039781">
    <property type="hits" value="0 hits in 76 CRISPR screens"/>
</dbReference>
<dbReference type="ChiTaRS" id="Hrct1">
    <property type="organism name" value="mouse"/>
</dbReference>
<dbReference type="PRO" id="PR:Q9D6B9"/>
<dbReference type="Proteomes" id="UP000000589">
    <property type="component" value="Chromosome 4"/>
</dbReference>
<dbReference type="RNAct" id="Q9D6B9">
    <property type="molecule type" value="protein"/>
</dbReference>
<dbReference type="Bgee" id="ENSMUSG00000071001">
    <property type="expression patterns" value="Expressed in interventricular septum and 81 other cell types or tissues"/>
</dbReference>
<dbReference type="GO" id="GO:0016020">
    <property type="term" value="C:membrane"/>
    <property type="evidence" value="ECO:0007669"/>
    <property type="project" value="UniProtKB-SubCell"/>
</dbReference>
<dbReference type="InterPro" id="IPR031506">
    <property type="entry name" value="HRCT1"/>
</dbReference>
<dbReference type="PANTHER" id="PTHR23009">
    <property type="match status" value="1"/>
</dbReference>
<dbReference type="PANTHER" id="PTHR23009:SF2">
    <property type="entry name" value="HISTIDINE-RICH CARBOXYL TERMINUS PROTEIN 1"/>
    <property type="match status" value="1"/>
</dbReference>
<dbReference type="Pfam" id="PF15758">
    <property type="entry name" value="HRCT1"/>
    <property type="match status" value="1"/>
</dbReference>
<evidence type="ECO:0000255" key="1"/>
<evidence type="ECO:0000256" key="2">
    <source>
        <dbReference type="SAM" id="MobiDB-lite"/>
    </source>
</evidence>
<evidence type="ECO:0000305" key="3"/>
<sequence length="109" mass="13009">MLGLLGNTTLVCWITGTALAFLMLLWLMALCLFHRSQEHDVERNRVRQARPRLFHGRRLRLPRLVHHHHHHHVTGVTSVGVHHHHHHSPHRLHHHKHHHRHHHAHGARR</sequence>
<keyword id="KW-0472">Membrane</keyword>
<keyword id="KW-1185">Reference proteome</keyword>
<keyword id="KW-0812">Transmembrane</keyword>
<keyword id="KW-1133">Transmembrane helix</keyword>
<proteinExistence type="predicted"/>
<protein>
    <recommendedName>
        <fullName>Histidine-rich carboxyl terminus protein 1</fullName>
    </recommendedName>
</protein>
<gene>
    <name type="primary">Hrct1</name>
</gene>
<comment type="subcellular location">
    <subcellularLocation>
        <location evidence="3">Membrane</location>
        <topology evidence="3">Single-pass membrane protein</topology>
    </subcellularLocation>
</comment>
<organism>
    <name type="scientific">Mus musculus</name>
    <name type="common">Mouse</name>
    <dbReference type="NCBI Taxonomy" id="10090"/>
    <lineage>
        <taxon>Eukaryota</taxon>
        <taxon>Metazoa</taxon>
        <taxon>Chordata</taxon>
        <taxon>Craniata</taxon>
        <taxon>Vertebrata</taxon>
        <taxon>Euteleostomi</taxon>
        <taxon>Mammalia</taxon>
        <taxon>Eutheria</taxon>
        <taxon>Euarchontoglires</taxon>
        <taxon>Glires</taxon>
        <taxon>Rodentia</taxon>
        <taxon>Myomorpha</taxon>
        <taxon>Muroidea</taxon>
        <taxon>Muridae</taxon>
        <taxon>Murinae</taxon>
        <taxon>Mus</taxon>
        <taxon>Mus</taxon>
    </lineage>
</organism>
<reference key="1">
    <citation type="journal article" date="2005" name="Science">
        <title>The transcriptional landscape of the mammalian genome.</title>
        <authorList>
            <person name="Carninci P."/>
            <person name="Kasukawa T."/>
            <person name="Katayama S."/>
            <person name="Gough J."/>
            <person name="Frith M.C."/>
            <person name="Maeda N."/>
            <person name="Oyama R."/>
            <person name="Ravasi T."/>
            <person name="Lenhard B."/>
            <person name="Wells C."/>
            <person name="Kodzius R."/>
            <person name="Shimokawa K."/>
            <person name="Bajic V.B."/>
            <person name="Brenner S.E."/>
            <person name="Batalov S."/>
            <person name="Forrest A.R."/>
            <person name="Zavolan M."/>
            <person name="Davis M.J."/>
            <person name="Wilming L.G."/>
            <person name="Aidinis V."/>
            <person name="Allen J.E."/>
            <person name="Ambesi-Impiombato A."/>
            <person name="Apweiler R."/>
            <person name="Aturaliya R.N."/>
            <person name="Bailey T.L."/>
            <person name="Bansal M."/>
            <person name="Baxter L."/>
            <person name="Beisel K.W."/>
            <person name="Bersano T."/>
            <person name="Bono H."/>
            <person name="Chalk A.M."/>
            <person name="Chiu K.P."/>
            <person name="Choudhary V."/>
            <person name="Christoffels A."/>
            <person name="Clutterbuck D.R."/>
            <person name="Crowe M.L."/>
            <person name="Dalla E."/>
            <person name="Dalrymple B.P."/>
            <person name="de Bono B."/>
            <person name="Della Gatta G."/>
            <person name="di Bernardo D."/>
            <person name="Down T."/>
            <person name="Engstrom P."/>
            <person name="Fagiolini M."/>
            <person name="Faulkner G."/>
            <person name="Fletcher C.F."/>
            <person name="Fukushima T."/>
            <person name="Furuno M."/>
            <person name="Futaki S."/>
            <person name="Gariboldi M."/>
            <person name="Georgii-Hemming P."/>
            <person name="Gingeras T.R."/>
            <person name="Gojobori T."/>
            <person name="Green R.E."/>
            <person name="Gustincich S."/>
            <person name="Harbers M."/>
            <person name="Hayashi Y."/>
            <person name="Hensch T.K."/>
            <person name="Hirokawa N."/>
            <person name="Hill D."/>
            <person name="Huminiecki L."/>
            <person name="Iacono M."/>
            <person name="Ikeo K."/>
            <person name="Iwama A."/>
            <person name="Ishikawa T."/>
            <person name="Jakt M."/>
            <person name="Kanapin A."/>
            <person name="Katoh M."/>
            <person name="Kawasawa Y."/>
            <person name="Kelso J."/>
            <person name="Kitamura H."/>
            <person name="Kitano H."/>
            <person name="Kollias G."/>
            <person name="Krishnan S.P."/>
            <person name="Kruger A."/>
            <person name="Kummerfeld S.K."/>
            <person name="Kurochkin I.V."/>
            <person name="Lareau L.F."/>
            <person name="Lazarevic D."/>
            <person name="Lipovich L."/>
            <person name="Liu J."/>
            <person name="Liuni S."/>
            <person name="McWilliam S."/>
            <person name="Madan Babu M."/>
            <person name="Madera M."/>
            <person name="Marchionni L."/>
            <person name="Matsuda H."/>
            <person name="Matsuzawa S."/>
            <person name="Miki H."/>
            <person name="Mignone F."/>
            <person name="Miyake S."/>
            <person name="Morris K."/>
            <person name="Mottagui-Tabar S."/>
            <person name="Mulder N."/>
            <person name="Nakano N."/>
            <person name="Nakauchi H."/>
            <person name="Ng P."/>
            <person name="Nilsson R."/>
            <person name="Nishiguchi S."/>
            <person name="Nishikawa S."/>
            <person name="Nori F."/>
            <person name="Ohara O."/>
            <person name="Okazaki Y."/>
            <person name="Orlando V."/>
            <person name="Pang K.C."/>
            <person name="Pavan W.J."/>
            <person name="Pavesi G."/>
            <person name="Pesole G."/>
            <person name="Petrovsky N."/>
            <person name="Piazza S."/>
            <person name="Reed J."/>
            <person name="Reid J.F."/>
            <person name="Ring B.Z."/>
            <person name="Ringwald M."/>
            <person name="Rost B."/>
            <person name="Ruan Y."/>
            <person name="Salzberg S.L."/>
            <person name="Sandelin A."/>
            <person name="Schneider C."/>
            <person name="Schoenbach C."/>
            <person name="Sekiguchi K."/>
            <person name="Semple C.A."/>
            <person name="Seno S."/>
            <person name="Sessa L."/>
            <person name="Sheng Y."/>
            <person name="Shibata Y."/>
            <person name="Shimada H."/>
            <person name="Shimada K."/>
            <person name="Silva D."/>
            <person name="Sinclair B."/>
            <person name="Sperling S."/>
            <person name="Stupka E."/>
            <person name="Sugiura K."/>
            <person name="Sultana R."/>
            <person name="Takenaka Y."/>
            <person name="Taki K."/>
            <person name="Tammoja K."/>
            <person name="Tan S.L."/>
            <person name="Tang S."/>
            <person name="Taylor M.S."/>
            <person name="Tegner J."/>
            <person name="Teichmann S.A."/>
            <person name="Ueda H.R."/>
            <person name="van Nimwegen E."/>
            <person name="Verardo R."/>
            <person name="Wei C.L."/>
            <person name="Yagi K."/>
            <person name="Yamanishi H."/>
            <person name="Zabarovsky E."/>
            <person name="Zhu S."/>
            <person name="Zimmer A."/>
            <person name="Hide W."/>
            <person name="Bult C."/>
            <person name="Grimmond S.M."/>
            <person name="Teasdale R.D."/>
            <person name="Liu E.T."/>
            <person name="Brusic V."/>
            <person name="Quackenbush J."/>
            <person name="Wahlestedt C."/>
            <person name="Mattick J.S."/>
            <person name="Hume D.A."/>
            <person name="Kai C."/>
            <person name="Sasaki D."/>
            <person name="Tomaru Y."/>
            <person name="Fukuda S."/>
            <person name="Kanamori-Katayama M."/>
            <person name="Suzuki M."/>
            <person name="Aoki J."/>
            <person name="Arakawa T."/>
            <person name="Iida J."/>
            <person name="Imamura K."/>
            <person name="Itoh M."/>
            <person name="Kato T."/>
            <person name="Kawaji H."/>
            <person name="Kawagashira N."/>
            <person name="Kawashima T."/>
            <person name="Kojima M."/>
            <person name="Kondo S."/>
            <person name="Konno H."/>
            <person name="Nakano K."/>
            <person name="Ninomiya N."/>
            <person name="Nishio T."/>
            <person name="Okada M."/>
            <person name="Plessy C."/>
            <person name="Shibata K."/>
            <person name="Shiraki T."/>
            <person name="Suzuki S."/>
            <person name="Tagami M."/>
            <person name="Waki K."/>
            <person name="Watahiki A."/>
            <person name="Okamura-Oho Y."/>
            <person name="Suzuki H."/>
            <person name="Kawai J."/>
            <person name="Hayashizaki Y."/>
        </authorList>
    </citation>
    <scope>NUCLEOTIDE SEQUENCE [LARGE SCALE MRNA]</scope>
    <source>
        <strain>C57BL/6J</strain>
        <tissue>Placenta</tissue>
    </source>
</reference>
<reference key="2">
    <citation type="journal article" date="2009" name="PLoS Biol.">
        <title>Lineage-specific biology revealed by a finished genome assembly of the mouse.</title>
        <authorList>
            <person name="Church D.M."/>
            <person name="Goodstadt L."/>
            <person name="Hillier L.W."/>
            <person name="Zody M.C."/>
            <person name="Goldstein S."/>
            <person name="She X."/>
            <person name="Bult C.J."/>
            <person name="Agarwala R."/>
            <person name="Cherry J.L."/>
            <person name="DiCuccio M."/>
            <person name="Hlavina W."/>
            <person name="Kapustin Y."/>
            <person name="Meric P."/>
            <person name="Maglott D."/>
            <person name="Birtle Z."/>
            <person name="Marques A.C."/>
            <person name="Graves T."/>
            <person name="Zhou S."/>
            <person name="Teague B."/>
            <person name="Potamousis K."/>
            <person name="Churas C."/>
            <person name="Place M."/>
            <person name="Herschleb J."/>
            <person name="Runnheim R."/>
            <person name="Forrest D."/>
            <person name="Amos-Landgraf J."/>
            <person name="Schwartz D.C."/>
            <person name="Cheng Z."/>
            <person name="Lindblad-Toh K."/>
            <person name="Eichler E.E."/>
            <person name="Ponting C.P."/>
        </authorList>
    </citation>
    <scope>NUCLEOTIDE SEQUENCE [LARGE SCALE GENOMIC DNA]</scope>
    <source>
        <strain>C57BL/6J</strain>
    </source>
</reference>